<evidence type="ECO:0000255" key="1">
    <source>
        <dbReference type="HAMAP-Rule" id="MF_01343"/>
    </source>
</evidence>
<evidence type="ECO:0000305" key="2"/>
<feature type="chain" id="PRO_1000054786" description="Small ribosomal subunit protein uS15">
    <location>
        <begin position="1"/>
        <end position="88"/>
    </location>
</feature>
<proteinExistence type="inferred from homology"/>
<dbReference type="EMBL" id="CP000437">
    <property type="protein sequence ID" value="ABI83294.1"/>
    <property type="molecule type" value="Genomic_DNA"/>
</dbReference>
<dbReference type="RefSeq" id="WP_003016883.1">
    <property type="nucleotide sequence ID" value="NC_017463.1"/>
</dbReference>
<dbReference type="SMR" id="Q0BKU0"/>
<dbReference type="KEGG" id="fth:FTH_1488"/>
<dbReference type="GO" id="GO:0022627">
    <property type="term" value="C:cytosolic small ribosomal subunit"/>
    <property type="evidence" value="ECO:0007669"/>
    <property type="project" value="TreeGrafter"/>
</dbReference>
<dbReference type="GO" id="GO:0019843">
    <property type="term" value="F:rRNA binding"/>
    <property type="evidence" value="ECO:0007669"/>
    <property type="project" value="UniProtKB-UniRule"/>
</dbReference>
<dbReference type="GO" id="GO:0003735">
    <property type="term" value="F:structural constituent of ribosome"/>
    <property type="evidence" value="ECO:0007669"/>
    <property type="project" value="InterPro"/>
</dbReference>
<dbReference type="GO" id="GO:0006412">
    <property type="term" value="P:translation"/>
    <property type="evidence" value="ECO:0007669"/>
    <property type="project" value="UniProtKB-UniRule"/>
</dbReference>
<dbReference type="CDD" id="cd00353">
    <property type="entry name" value="Ribosomal_S15p_S13e"/>
    <property type="match status" value="1"/>
</dbReference>
<dbReference type="FunFam" id="1.10.287.10:FF:000002">
    <property type="entry name" value="30S ribosomal protein S15"/>
    <property type="match status" value="1"/>
</dbReference>
<dbReference type="Gene3D" id="6.10.250.3130">
    <property type="match status" value="1"/>
</dbReference>
<dbReference type="Gene3D" id="1.10.287.10">
    <property type="entry name" value="S15/NS1, RNA-binding"/>
    <property type="match status" value="1"/>
</dbReference>
<dbReference type="HAMAP" id="MF_01343_B">
    <property type="entry name" value="Ribosomal_uS15_B"/>
    <property type="match status" value="1"/>
</dbReference>
<dbReference type="InterPro" id="IPR000589">
    <property type="entry name" value="Ribosomal_uS15"/>
</dbReference>
<dbReference type="InterPro" id="IPR005290">
    <property type="entry name" value="Ribosomal_uS15_bac-type"/>
</dbReference>
<dbReference type="InterPro" id="IPR009068">
    <property type="entry name" value="uS15_NS1_RNA-bd_sf"/>
</dbReference>
<dbReference type="NCBIfam" id="TIGR00952">
    <property type="entry name" value="S15_bact"/>
    <property type="match status" value="1"/>
</dbReference>
<dbReference type="PANTHER" id="PTHR23321">
    <property type="entry name" value="RIBOSOMAL PROTEIN S15, BACTERIAL AND ORGANELLAR"/>
    <property type="match status" value="1"/>
</dbReference>
<dbReference type="PANTHER" id="PTHR23321:SF26">
    <property type="entry name" value="SMALL RIBOSOMAL SUBUNIT PROTEIN US15M"/>
    <property type="match status" value="1"/>
</dbReference>
<dbReference type="Pfam" id="PF00312">
    <property type="entry name" value="Ribosomal_S15"/>
    <property type="match status" value="1"/>
</dbReference>
<dbReference type="SMART" id="SM01387">
    <property type="entry name" value="Ribosomal_S15"/>
    <property type="match status" value="1"/>
</dbReference>
<dbReference type="SUPFAM" id="SSF47060">
    <property type="entry name" value="S15/NS1 RNA-binding domain"/>
    <property type="match status" value="1"/>
</dbReference>
<dbReference type="PROSITE" id="PS00362">
    <property type="entry name" value="RIBOSOMAL_S15"/>
    <property type="match status" value="1"/>
</dbReference>
<protein>
    <recommendedName>
        <fullName evidence="1">Small ribosomal subunit protein uS15</fullName>
    </recommendedName>
    <alternativeName>
        <fullName evidence="2">30S ribosomal protein S15</fullName>
    </alternativeName>
</protein>
<sequence length="88" mass="10359">MLTAQDKQKIIKENQLAESDTGSPEVQVALLTARINDLKGHFEAHKKDNHSRRGLLRLVSQRRKLLDYLHDKDVERYRSLIKKLNIRR</sequence>
<accession>Q0BKU0</accession>
<gene>
    <name evidence="1" type="primary">rpsO</name>
    <name type="ordered locus">FTH_1488</name>
</gene>
<reference key="1">
    <citation type="journal article" date="2006" name="J. Bacteriol.">
        <title>Chromosome rearrangement and diversification of Francisella tularensis revealed by the type B (OSU18) genome sequence.</title>
        <authorList>
            <person name="Petrosino J.F."/>
            <person name="Xiang Q."/>
            <person name="Karpathy S.E."/>
            <person name="Jiang H."/>
            <person name="Yerrapragada S."/>
            <person name="Liu Y."/>
            <person name="Gioia J."/>
            <person name="Hemphill L."/>
            <person name="Gonzalez A."/>
            <person name="Raghavan T.M."/>
            <person name="Uzman A."/>
            <person name="Fox G.E."/>
            <person name="Highlander S."/>
            <person name="Reichard M."/>
            <person name="Morton R.J."/>
            <person name="Clinkenbeard K.D."/>
            <person name="Weinstock G.M."/>
        </authorList>
    </citation>
    <scope>NUCLEOTIDE SEQUENCE [LARGE SCALE GENOMIC DNA]</scope>
    <source>
        <strain>OSU18</strain>
    </source>
</reference>
<keyword id="KW-0687">Ribonucleoprotein</keyword>
<keyword id="KW-0689">Ribosomal protein</keyword>
<keyword id="KW-0694">RNA-binding</keyword>
<keyword id="KW-0699">rRNA-binding</keyword>
<comment type="function">
    <text evidence="1">One of the primary rRNA binding proteins, it binds directly to 16S rRNA where it helps nucleate assembly of the platform of the 30S subunit by binding and bridging several RNA helices of the 16S rRNA.</text>
</comment>
<comment type="function">
    <text evidence="1">Forms an intersubunit bridge (bridge B4) with the 23S rRNA of the 50S subunit in the ribosome.</text>
</comment>
<comment type="subunit">
    <text evidence="1">Part of the 30S ribosomal subunit. Forms a bridge to the 50S subunit in the 70S ribosome, contacting the 23S rRNA.</text>
</comment>
<comment type="similarity">
    <text evidence="1">Belongs to the universal ribosomal protein uS15 family.</text>
</comment>
<name>RS15_FRATO</name>
<organism>
    <name type="scientific">Francisella tularensis subsp. holarctica (strain OSU18)</name>
    <dbReference type="NCBI Taxonomy" id="393011"/>
    <lineage>
        <taxon>Bacteria</taxon>
        <taxon>Pseudomonadati</taxon>
        <taxon>Pseudomonadota</taxon>
        <taxon>Gammaproteobacteria</taxon>
        <taxon>Thiotrichales</taxon>
        <taxon>Francisellaceae</taxon>
        <taxon>Francisella</taxon>
    </lineage>
</organism>